<accession>Q7A1J9</accession>
<organism>
    <name type="scientific">Staphylococcus aureus (strain MW2)</name>
    <dbReference type="NCBI Taxonomy" id="196620"/>
    <lineage>
        <taxon>Bacteria</taxon>
        <taxon>Bacillati</taxon>
        <taxon>Bacillota</taxon>
        <taxon>Bacilli</taxon>
        <taxon>Bacillales</taxon>
        <taxon>Staphylococcaceae</taxon>
        <taxon>Staphylococcus</taxon>
    </lineage>
</organism>
<dbReference type="EMBL" id="BA000033">
    <property type="protein sequence ID" value="BAB94513.1"/>
    <property type="molecule type" value="Genomic_DNA"/>
</dbReference>
<dbReference type="RefSeq" id="WP_001283444.1">
    <property type="nucleotide sequence ID" value="NC_003923.1"/>
</dbReference>
<dbReference type="SMR" id="Q7A1J9"/>
<dbReference type="CARD" id="ARO:3000815">
    <property type="molecule name" value="mgrA"/>
    <property type="mechanism identifier" value="ARO:0010000"/>
    <property type="mechanism name" value="antibiotic efflux"/>
</dbReference>
<dbReference type="GeneID" id="98345028"/>
<dbReference type="KEGG" id="sam:MW0648"/>
<dbReference type="HOGENOM" id="CLU_083287_3_2_9"/>
<dbReference type="GO" id="GO:0005737">
    <property type="term" value="C:cytoplasm"/>
    <property type="evidence" value="ECO:0007669"/>
    <property type="project" value="UniProtKB-SubCell"/>
</dbReference>
<dbReference type="GO" id="GO:0003677">
    <property type="term" value="F:DNA binding"/>
    <property type="evidence" value="ECO:0007669"/>
    <property type="project" value="UniProtKB-KW"/>
</dbReference>
<dbReference type="GO" id="GO:0003700">
    <property type="term" value="F:DNA-binding transcription factor activity"/>
    <property type="evidence" value="ECO:0007669"/>
    <property type="project" value="InterPro"/>
</dbReference>
<dbReference type="GO" id="GO:0006950">
    <property type="term" value="P:response to stress"/>
    <property type="evidence" value="ECO:0007669"/>
    <property type="project" value="TreeGrafter"/>
</dbReference>
<dbReference type="FunFam" id="1.10.10.10:FF:000163">
    <property type="entry name" value="MarR family transcriptional regulator"/>
    <property type="match status" value="1"/>
</dbReference>
<dbReference type="Gene3D" id="1.10.10.10">
    <property type="entry name" value="Winged helix-like DNA-binding domain superfamily/Winged helix DNA-binding domain"/>
    <property type="match status" value="1"/>
</dbReference>
<dbReference type="InterPro" id="IPR000835">
    <property type="entry name" value="HTH_MarR-typ"/>
</dbReference>
<dbReference type="InterPro" id="IPR039422">
    <property type="entry name" value="MarR/SlyA-like"/>
</dbReference>
<dbReference type="InterPro" id="IPR055166">
    <property type="entry name" value="Transc_reg_Sar_Rot_HTH"/>
</dbReference>
<dbReference type="InterPro" id="IPR023187">
    <property type="entry name" value="Tscrpt_reg_MarR-type_CS"/>
</dbReference>
<dbReference type="InterPro" id="IPR036388">
    <property type="entry name" value="WH-like_DNA-bd_sf"/>
</dbReference>
<dbReference type="InterPro" id="IPR036390">
    <property type="entry name" value="WH_DNA-bd_sf"/>
</dbReference>
<dbReference type="PANTHER" id="PTHR33164:SF5">
    <property type="entry name" value="ORGANIC HYDROPEROXIDE RESISTANCE TRANSCRIPTIONAL REGULATOR"/>
    <property type="match status" value="1"/>
</dbReference>
<dbReference type="PANTHER" id="PTHR33164">
    <property type="entry name" value="TRANSCRIPTIONAL REGULATOR, MARR FAMILY"/>
    <property type="match status" value="1"/>
</dbReference>
<dbReference type="Pfam" id="PF22381">
    <property type="entry name" value="Staph_reg_Sar_Rot"/>
    <property type="match status" value="1"/>
</dbReference>
<dbReference type="SMART" id="SM00347">
    <property type="entry name" value="HTH_MARR"/>
    <property type="match status" value="1"/>
</dbReference>
<dbReference type="SUPFAM" id="SSF46785">
    <property type="entry name" value="Winged helix' DNA-binding domain"/>
    <property type="match status" value="1"/>
</dbReference>
<dbReference type="PROSITE" id="PS01117">
    <property type="entry name" value="HTH_MARR_1"/>
    <property type="match status" value="1"/>
</dbReference>
<dbReference type="PROSITE" id="PS50995">
    <property type="entry name" value="HTH_MARR_2"/>
    <property type="match status" value="1"/>
</dbReference>
<sequence>MSDQHNLKEQLCFSLYNAQRQVNRYYSNKVFKKYNLTYPQFLVLTILWDESPVNVKKVVTELALDTGTVSPLLKRMEQVDLIKRERSEVDQREVFIHLTDKSETIRPELSNASDKVASASSLSQDEVKELNRLLGKVIHAFDETKEK</sequence>
<protein>
    <recommendedName>
        <fullName>HTH-type transcriptional regulator MgrA</fullName>
    </recommendedName>
</protein>
<comment type="function">
    <text evidence="1">Regulatory protein involved in autolytic activity, multidrug resistance and virulence.</text>
</comment>
<comment type="subcellular location">
    <subcellularLocation>
        <location evidence="3">Cytoplasm</location>
    </subcellularLocation>
</comment>
<reference key="1">
    <citation type="journal article" date="2002" name="Lancet">
        <title>Genome and virulence determinants of high virulence community-acquired MRSA.</title>
        <authorList>
            <person name="Baba T."/>
            <person name="Takeuchi F."/>
            <person name="Kuroda M."/>
            <person name="Yuzawa H."/>
            <person name="Aoki K."/>
            <person name="Oguchi A."/>
            <person name="Nagai Y."/>
            <person name="Iwama N."/>
            <person name="Asano K."/>
            <person name="Naimi T."/>
            <person name="Kuroda H."/>
            <person name="Cui L."/>
            <person name="Yamamoto K."/>
            <person name="Hiramatsu K."/>
        </authorList>
    </citation>
    <scope>NUCLEOTIDE SEQUENCE [LARGE SCALE GENOMIC DNA]</scope>
    <source>
        <strain>MW2</strain>
    </source>
</reference>
<keyword id="KW-0010">Activator</keyword>
<keyword id="KW-0963">Cytoplasm</keyword>
<keyword id="KW-0238">DNA-binding</keyword>
<keyword id="KW-0678">Repressor</keyword>
<keyword id="KW-0804">Transcription</keyword>
<keyword id="KW-0805">Transcription regulation</keyword>
<keyword id="KW-0843">Virulence</keyword>
<proteinExistence type="inferred from homology"/>
<gene>
    <name type="primary">mgrA</name>
    <name type="synonym">norR</name>
    <name type="ordered locus">MW0648</name>
</gene>
<name>MGRA_STAAW</name>
<evidence type="ECO:0000250" key="1"/>
<evidence type="ECO:0000255" key="2">
    <source>
        <dbReference type="PROSITE-ProRule" id="PRU00345"/>
    </source>
</evidence>
<evidence type="ECO:0000305" key="3"/>
<feature type="initiator methionine" description="Removed" evidence="1">
    <location>
        <position position="1"/>
    </location>
</feature>
<feature type="chain" id="PRO_0000054372" description="HTH-type transcriptional regulator MgrA">
    <location>
        <begin position="2"/>
        <end position="147"/>
    </location>
</feature>
<feature type="domain" description="HTH marR-type" evidence="2">
    <location>
        <begin position="8"/>
        <end position="139"/>
    </location>
</feature>
<feature type="DNA-binding region" description="H-T-H motif" evidence="2">
    <location>
        <begin position="55"/>
        <end position="78"/>
    </location>
</feature>